<dbReference type="EC" id="5.6.1.1" evidence="3"/>
<dbReference type="EMBL" id="CH954182">
    <property type="protein sequence ID" value="EDV53927.1"/>
    <property type="molecule type" value="Genomic_DNA"/>
</dbReference>
<dbReference type="SMR" id="B3P8A3"/>
<dbReference type="EnsemblMetazoa" id="FBtr0131301">
    <property type="protein sequence ID" value="FBpp0129793"/>
    <property type="gene ID" value="FBgn0103548"/>
</dbReference>
<dbReference type="EnsemblMetazoa" id="XM_001982021.3">
    <property type="protein sequence ID" value="XP_001982057.1"/>
    <property type="gene ID" value="LOC6555002"/>
</dbReference>
<dbReference type="GeneID" id="6555002"/>
<dbReference type="KEGG" id="der:6555002"/>
<dbReference type="eggNOG" id="KOG0740">
    <property type="taxonomic scope" value="Eukaryota"/>
</dbReference>
<dbReference type="HOGENOM" id="CLU_000688_21_5_1"/>
<dbReference type="OMA" id="KSREPML"/>
<dbReference type="OrthoDB" id="10251136at2759"/>
<dbReference type="PhylomeDB" id="B3P8A3"/>
<dbReference type="Proteomes" id="UP000008711">
    <property type="component" value="Unassembled WGS sequence"/>
</dbReference>
<dbReference type="GO" id="GO:0005813">
    <property type="term" value="C:centrosome"/>
    <property type="evidence" value="ECO:0000250"/>
    <property type="project" value="UniProtKB"/>
</dbReference>
<dbReference type="GO" id="GO:0005694">
    <property type="term" value="C:chromosome"/>
    <property type="evidence" value="ECO:0007669"/>
    <property type="project" value="UniProtKB-SubCell"/>
</dbReference>
<dbReference type="GO" id="GO:0005811">
    <property type="term" value="C:lipid droplet"/>
    <property type="evidence" value="ECO:0007669"/>
    <property type="project" value="UniProtKB-SubCell"/>
</dbReference>
<dbReference type="GO" id="GO:0016020">
    <property type="term" value="C:membrane"/>
    <property type="evidence" value="ECO:0007669"/>
    <property type="project" value="UniProtKB-SubCell"/>
</dbReference>
<dbReference type="GO" id="GO:0005874">
    <property type="term" value="C:microtubule"/>
    <property type="evidence" value="ECO:0007669"/>
    <property type="project" value="UniProtKB-UniRule"/>
</dbReference>
<dbReference type="GO" id="GO:0031594">
    <property type="term" value="C:neuromuscular junction"/>
    <property type="evidence" value="ECO:0007669"/>
    <property type="project" value="EnsemblMetazoa"/>
</dbReference>
<dbReference type="GO" id="GO:0005819">
    <property type="term" value="C:spindle"/>
    <property type="evidence" value="ECO:0007669"/>
    <property type="project" value="UniProtKB-UniRule"/>
</dbReference>
<dbReference type="GO" id="GO:0008021">
    <property type="term" value="C:synaptic vesicle"/>
    <property type="evidence" value="ECO:0007669"/>
    <property type="project" value="EnsemblMetazoa"/>
</dbReference>
<dbReference type="GO" id="GO:0043195">
    <property type="term" value="C:terminal bouton"/>
    <property type="evidence" value="ECO:0007669"/>
    <property type="project" value="EnsemblMetazoa"/>
</dbReference>
<dbReference type="GO" id="GO:0005524">
    <property type="term" value="F:ATP binding"/>
    <property type="evidence" value="ECO:0007669"/>
    <property type="project" value="UniProtKB-UniRule"/>
</dbReference>
<dbReference type="GO" id="GO:0016887">
    <property type="term" value="F:ATP hydrolysis activity"/>
    <property type="evidence" value="ECO:0007669"/>
    <property type="project" value="InterPro"/>
</dbReference>
<dbReference type="GO" id="GO:0008017">
    <property type="term" value="F:microtubule binding"/>
    <property type="evidence" value="ECO:0000250"/>
    <property type="project" value="UniProtKB"/>
</dbReference>
<dbReference type="GO" id="GO:0008568">
    <property type="term" value="F:microtubule severing ATPase activity"/>
    <property type="evidence" value="ECO:0000250"/>
    <property type="project" value="UniProtKB"/>
</dbReference>
<dbReference type="GO" id="GO:0008344">
    <property type="term" value="P:adult locomotory behavior"/>
    <property type="evidence" value="ECO:0007669"/>
    <property type="project" value="UniProtKB-UniRule"/>
</dbReference>
<dbReference type="GO" id="GO:0051301">
    <property type="term" value="P:cell division"/>
    <property type="evidence" value="ECO:0007669"/>
    <property type="project" value="UniProtKB-KW"/>
</dbReference>
<dbReference type="GO" id="GO:0035099">
    <property type="term" value="P:hemocyte migration"/>
    <property type="evidence" value="ECO:0007669"/>
    <property type="project" value="EnsemblMetazoa"/>
</dbReference>
<dbReference type="GO" id="GO:0051013">
    <property type="term" value="P:microtubule severing"/>
    <property type="evidence" value="ECO:0000250"/>
    <property type="project" value="UniProtKB"/>
</dbReference>
<dbReference type="GO" id="GO:0007079">
    <property type="term" value="P:mitotic chromosome movement towards spindle pole"/>
    <property type="evidence" value="ECO:0007669"/>
    <property type="project" value="UniProtKB-UniRule"/>
</dbReference>
<dbReference type="GO" id="GO:0000022">
    <property type="term" value="P:mitotic spindle elongation"/>
    <property type="evidence" value="ECO:0007669"/>
    <property type="project" value="UniProtKB-UniRule"/>
</dbReference>
<dbReference type="GO" id="GO:0007026">
    <property type="term" value="P:negative regulation of microtubule depolymerization"/>
    <property type="evidence" value="ECO:0007669"/>
    <property type="project" value="EnsemblMetazoa"/>
</dbReference>
<dbReference type="GO" id="GO:1900074">
    <property type="term" value="P:negative regulation of neuromuscular synaptic transmission"/>
    <property type="evidence" value="ECO:0007669"/>
    <property type="project" value="EnsemblMetazoa"/>
</dbReference>
<dbReference type="GO" id="GO:0045886">
    <property type="term" value="P:negative regulation of synaptic assembly at neuromuscular junction"/>
    <property type="evidence" value="ECO:0007669"/>
    <property type="project" value="EnsemblMetazoa"/>
</dbReference>
<dbReference type="GO" id="GO:0007399">
    <property type="term" value="P:nervous system development"/>
    <property type="evidence" value="ECO:0007669"/>
    <property type="project" value="UniProtKB-KW"/>
</dbReference>
<dbReference type="GO" id="GO:0048691">
    <property type="term" value="P:positive regulation of axon extension involved in regeneration"/>
    <property type="evidence" value="ECO:0007669"/>
    <property type="project" value="EnsemblMetazoa"/>
</dbReference>
<dbReference type="GO" id="GO:0050775">
    <property type="term" value="P:positive regulation of dendrite morphogenesis"/>
    <property type="evidence" value="ECO:0007669"/>
    <property type="project" value="EnsemblMetazoa"/>
</dbReference>
<dbReference type="GO" id="GO:0045834">
    <property type="term" value="P:positive regulation of lipid metabolic process"/>
    <property type="evidence" value="ECO:0007669"/>
    <property type="project" value="EnsemblMetazoa"/>
</dbReference>
<dbReference type="GO" id="GO:0031117">
    <property type="term" value="P:positive regulation of microtubule depolymerization"/>
    <property type="evidence" value="ECO:0007669"/>
    <property type="project" value="UniProtKB-UniRule"/>
</dbReference>
<dbReference type="GO" id="GO:1900075">
    <property type="term" value="P:positive regulation of neuromuscular synaptic transmission"/>
    <property type="evidence" value="ECO:0007669"/>
    <property type="project" value="EnsemblMetazoa"/>
</dbReference>
<dbReference type="GO" id="GO:0045887">
    <property type="term" value="P:positive regulation of synaptic assembly at neuromuscular junction"/>
    <property type="evidence" value="ECO:0007669"/>
    <property type="project" value="EnsemblMetazoa"/>
</dbReference>
<dbReference type="GO" id="GO:0034214">
    <property type="term" value="P:protein hexamerization"/>
    <property type="evidence" value="ECO:0007669"/>
    <property type="project" value="UniProtKB-UniRule"/>
</dbReference>
<dbReference type="GO" id="GO:2000331">
    <property type="term" value="P:regulation of terminal button organization"/>
    <property type="evidence" value="ECO:0007669"/>
    <property type="project" value="EnsemblMetazoa"/>
</dbReference>
<dbReference type="CDD" id="cd02679">
    <property type="entry name" value="MIT_spastin"/>
    <property type="match status" value="1"/>
</dbReference>
<dbReference type="CDD" id="cd19524">
    <property type="entry name" value="RecA-like_spastin"/>
    <property type="match status" value="1"/>
</dbReference>
<dbReference type="FunFam" id="3.40.50.300:FF:000093">
    <property type="entry name" value="Fidgetin-like 1"/>
    <property type="match status" value="1"/>
</dbReference>
<dbReference type="FunFam" id="1.10.8.60:FF:000036">
    <property type="entry name" value="Spastin"/>
    <property type="match status" value="1"/>
</dbReference>
<dbReference type="FunFam" id="1.20.58.80:FF:000006">
    <property type="entry name" value="Spastin"/>
    <property type="match status" value="1"/>
</dbReference>
<dbReference type="Gene3D" id="1.10.8.60">
    <property type="match status" value="1"/>
</dbReference>
<dbReference type="Gene3D" id="3.40.50.300">
    <property type="entry name" value="P-loop containing nucleotide triphosphate hydrolases"/>
    <property type="match status" value="1"/>
</dbReference>
<dbReference type="Gene3D" id="1.20.58.80">
    <property type="entry name" value="Phosphotransferase system, lactose/cellobiose-type IIA subunit"/>
    <property type="match status" value="1"/>
</dbReference>
<dbReference type="HAMAP" id="MF_03021">
    <property type="entry name" value="Spastin"/>
    <property type="match status" value="1"/>
</dbReference>
<dbReference type="InterPro" id="IPR003593">
    <property type="entry name" value="AAA+_ATPase"/>
</dbReference>
<dbReference type="InterPro" id="IPR041569">
    <property type="entry name" value="AAA_lid_3"/>
</dbReference>
<dbReference type="InterPro" id="IPR003959">
    <property type="entry name" value="ATPase_AAA_core"/>
</dbReference>
<dbReference type="InterPro" id="IPR003960">
    <property type="entry name" value="ATPase_AAA_CS"/>
</dbReference>
<dbReference type="InterPro" id="IPR007330">
    <property type="entry name" value="MIT_dom"/>
</dbReference>
<dbReference type="InterPro" id="IPR050304">
    <property type="entry name" value="MT-severing_AAA_ATPase"/>
</dbReference>
<dbReference type="InterPro" id="IPR027417">
    <property type="entry name" value="P-loop_NTPase"/>
</dbReference>
<dbReference type="InterPro" id="IPR015415">
    <property type="entry name" value="Spast_Vps4_C"/>
</dbReference>
<dbReference type="InterPro" id="IPR017179">
    <property type="entry name" value="Spastin"/>
</dbReference>
<dbReference type="PANTHER" id="PTHR23074">
    <property type="entry name" value="AAA DOMAIN-CONTAINING"/>
    <property type="match status" value="1"/>
</dbReference>
<dbReference type="PANTHER" id="PTHR23074:SF86">
    <property type="entry name" value="SPASTIN"/>
    <property type="match status" value="1"/>
</dbReference>
<dbReference type="Pfam" id="PF00004">
    <property type="entry name" value="AAA"/>
    <property type="match status" value="1"/>
</dbReference>
<dbReference type="Pfam" id="PF17862">
    <property type="entry name" value="AAA_lid_3"/>
    <property type="match status" value="1"/>
</dbReference>
<dbReference type="Pfam" id="PF09336">
    <property type="entry name" value="Vps4_C"/>
    <property type="match status" value="1"/>
</dbReference>
<dbReference type="SMART" id="SM00382">
    <property type="entry name" value="AAA"/>
    <property type="match status" value="1"/>
</dbReference>
<dbReference type="SMART" id="SM00745">
    <property type="entry name" value="MIT"/>
    <property type="match status" value="1"/>
</dbReference>
<dbReference type="SUPFAM" id="SSF52540">
    <property type="entry name" value="P-loop containing nucleoside triphosphate hydrolases"/>
    <property type="match status" value="1"/>
</dbReference>
<dbReference type="PROSITE" id="PS00674">
    <property type="entry name" value="AAA"/>
    <property type="match status" value="1"/>
</dbReference>
<protein>
    <recommendedName>
        <fullName evidence="3">Spastin</fullName>
        <ecNumber evidence="3">5.6.1.1</ecNumber>
    </recommendedName>
</protein>
<gene>
    <name evidence="3" type="primary">spas</name>
    <name type="ORF">GG11247</name>
</gene>
<name>SPAST_DROER</name>
<organism>
    <name type="scientific">Drosophila erecta</name>
    <name type="common">Fruit fly</name>
    <dbReference type="NCBI Taxonomy" id="7220"/>
    <lineage>
        <taxon>Eukaryota</taxon>
        <taxon>Metazoa</taxon>
        <taxon>Ecdysozoa</taxon>
        <taxon>Arthropoda</taxon>
        <taxon>Hexapoda</taxon>
        <taxon>Insecta</taxon>
        <taxon>Pterygota</taxon>
        <taxon>Neoptera</taxon>
        <taxon>Endopterygota</taxon>
        <taxon>Diptera</taxon>
        <taxon>Brachycera</taxon>
        <taxon>Muscomorpha</taxon>
        <taxon>Ephydroidea</taxon>
        <taxon>Drosophilidae</taxon>
        <taxon>Drosophila</taxon>
        <taxon>Sophophora</taxon>
    </lineage>
</organism>
<reference key="1">
    <citation type="journal article" date="2007" name="Nature">
        <title>Evolution of genes and genomes on the Drosophila phylogeny.</title>
        <authorList>
            <consortium name="Drosophila 12 genomes consortium"/>
        </authorList>
    </citation>
    <scope>NUCLEOTIDE SEQUENCE [LARGE SCALE GENOMIC DNA]</scope>
    <source>
        <strain>Tucson 14021-0224.01</strain>
    </source>
</reference>
<sequence>MVRTKNQSSSSSASSSSTKSPIKSSSGAGSSGGGVGGRQSTHRSSSASNVAAVVAGGSSAAGGGSSSNRRSPGSSPDGDDDTTTTDDLTPTTCSPRSGHHHTYGGYSSSVHKQNLYVVSFPIIFLFNVLRSLIYQLFCIFRYLYGASTKVIYRPHRRDCNIEIVVQNSSKEQQQSLNHPSELSREGDGQEQQLSNQPQRFRPIQPLEMAANRPGGGYSPGPGDPLLAKQKHHHRRAFEYISKALKIDEENEGHKELAIELYRKGIKELEDGIAVDCWSGRGDVWDRAQRLHDKMQTNLSMARDRLHFLALREQDLQMQRLSLKEKPKVQAPSKPQKTREPMLAGMTNEPMKLRVRSSGYGPKATTSAQPTASGRKLTIGSKRPVNLAVANKSQTLPRNLGSKTSVGAVQRQPAKTAATPPAVRRQFSSGRNTPPQRSRTPINNNGPSGSGASTPVVSVKGVEQKLVQLILDEIVEGGAKVEWTDIAGQDVAKQALQEMVILPSVRPELFTGLRAPAKGLLLFGPPGNGKTLLARAVATECSATFLNISAASLTSKYVGDGEKLVRALFAVARHMQPSIIFIDEVDSLLSERSSSEHEASRRLKTEFLVEFDGLPGNPDGDRIVVLAATNRPQELDEAALRRFTKRVYVSLPDEQTRELLLNRLLQKQGSPLDTEALRRLAKITDGYSGSDLTALAKDAALEPIRELNVEQVKCLDISAMRAITEQDFHSSLKRIRRSVAPQSLNSYEKWSQDYGDITI</sequence>
<keyword id="KW-0067">ATP-binding</keyword>
<keyword id="KW-0131">Cell cycle</keyword>
<keyword id="KW-0132">Cell division</keyword>
<keyword id="KW-0158">Chromosome</keyword>
<keyword id="KW-0963">Cytoplasm</keyword>
<keyword id="KW-0206">Cytoskeleton</keyword>
<keyword id="KW-0217">Developmental protein</keyword>
<keyword id="KW-0221">Differentiation</keyword>
<keyword id="KW-0413">Isomerase</keyword>
<keyword id="KW-0551">Lipid droplet</keyword>
<keyword id="KW-0472">Membrane</keyword>
<keyword id="KW-0493">Microtubule</keyword>
<keyword id="KW-0498">Mitosis</keyword>
<keyword id="KW-0524">Neurogenesis</keyword>
<keyword id="KW-0547">Nucleotide-binding</keyword>
<evidence type="ECO:0000250" key="1">
    <source>
        <dbReference type="UniProtKB" id="Q8I0P1"/>
    </source>
</evidence>
<evidence type="ECO:0000255" key="2"/>
<evidence type="ECO:0000255" key="3">
    <source>
        <dbReference type="HAMAP-Rule" id="MF_03021"/>
    </source>
</evidence>
<evidence type="ECO:0000256" key="4">
    <source>
        <dbReference type="SAM" id="MobiDB-lite"/>
    </source>
</evidence>
<comment type="function">
    <text evidence="3">ATP-dependent microtubule severing protein. Stimulates microtubule minus-end depolymerization and poleward microtubule flux in the mitotic spindle. Regulates microtubule stability in the neuromuscular junction synapse. Involved in lipid metabolism by regulating the size and distribution of lipid droplets. Involved in axon regeneration by regulating microtubule severing.</text>
</comment>
<comment type="catalytic activity">
    <reaction evidence="3">
        <text>n ATP + n H2O + a microtubule = n ADP + n phosphate + (n+1) alpha/beta tubulin heterodimers.</text>
        <dbReference type="EC" id="5.6.1.1"/>
    </reaction>
</comment>
<comment type="subunit">
    <text evidence="3">Homohexamer. The homohexamer is stabilized by ATP-binding. The homohexamer may adopt a ring conformation through which microtubules pass prior to being severed. Interacts with microtubules. Interacts with atl; may be involved in microtubule dynamics.</text>
</comment>
<comment type="subcellular location">
    <subcellularLocation>
        <location evidence="3">Membrane</location>
        <topology evidence="3">Peripheral membrane protein</topology>
    </subcellularLocation>
    <subcellularLocation>
        <location evidence="3">Cytoplasm</location>
        <location evidence="3">Cytoskeleton</location>
        <location evidence="3">Microtubule organizing center</location>
        <location evidence="3">Centrosome</location>
    </subcellularLocation>
    <subcellularLocation>
        <location evidence="3">Cytoplasm</location>
        <location evidence="3">Cytoskeleton</location>
    </subcellularLocation>
    <subcellularLocation>
        <location evidence="3">Chromosome</location>
    </subcellularLocation>
    <subcellularLocation>
        <location evidence="3">Lipid droplet</location>
    </subcellularLocation>
    <text evidence="3">Forms an intramembrane hairpin-like structure in the membrane. Colocalizes with cellular microtubule arrays. Localizes to chromosomes from prometaphase/metaphase to anaphase, and this requires microtubules. Localizes to discrete punctate cytoplasmic foci which may correspond to secretory vesicles.</text>
</comment>
<comment type="similarity">
    <text evidence="3">Belongs to the AAA ATPase family. Spastin subfamily.</text>
</comment>
<proteinExistence type="inferred from homology"/>
<feature type="chain" id="PRO_0000367142" description="Spastin">
    <location>
        <begin position="1"/>
        <end position="758"/>
    </location>
</feature>
<feature type="topological domain" description="Cytoplasmic" evidence="3">
    <location>
        <begin position="1"/>
        <end position="121"/>
    </location>
</feature>
<feature type="intramembrane region" description="Helical" evidence="3">
    <location>
        <begin position="122"/>
        <end position="142"/>
    </location>
</feature>
<feature type="topological domain" description="Cytoplasmic" evidence="3">
    <location>
        <begin position="143"/>
        <end position="758"/>
    </location>
</feature>
<feature type="domain" description="MIT" evidence="2">
    <location>
        <begin position="233"/>
        <end position="308"/>
    </location>
</feature>
<feature type="region of interest" description="Required for localization to punctate cytoplasmic foci" evidence="1">
    <location>
        <begin position="1"/>
        <end position="210"/>
    </location>
</feature>
<feature type="region of interest" description="Disordered" evidence="4">
    <location>
        <begin position="1"/>
        <end position="99"/>
    </location>
</feature>
<feature type="region of interest" description="Disordered" evidence="4">
    <location>
        <begin position="169"/>
        <end position="203"/>
    </location>
</feature>
<feature type="region of interest" description="Sufficient for interaction with microtubules and microtubule severing" evidence="1">
    <location>
        <begin position="208"/>
        <end position="758"/>
    </location>
</feature>
<feature type="region of interest" description="Disordered" evidence="4">
    <location>
        <begin position="353"/>
        <end position="375"/>
    </location>
</feature>
<feature type="region of interest" description="Disordered" evidence="4">
    <location>
        <begin position="390"/>
        <end position="454"/>
    </location>
</feature>
<feature type="region of interest" description="Required for interaction with microtubules" evidence="1">
    <location>
        <begin position="443"/>
        <end position="455"/>
    </location>
</feature>
<feature type="compositionally biased region" description="Low complexity" evidence="4">
    <location>
        <begin position="8"/>
        <end position="28"/>
    </location>
</feature>
<feature type="compositionally biased region" description="Low complexity" evidence="4">
    <location>
        <begin position="43"/>
        <end position="58"/>
    </location>
</feature>
<feature type="compositionally biased region" description="Low complexity" evidence="4">
    <location>
        <begin position="66"/>
        <end position="76"/>
    </location>
</feature>
<feature type="compositionally biased region" description="Low complexity" evidence="4">
    <location>
        <begin position="85"/>
        <end position="95"/>
    </location>
</feature>
<feature type="compositionally biased region" description="Polar residues" evidence="4">
    <location>
        <begin position="169"/>
        <end position="180"/>
    </location>
</feature>
<feature type="compositionally biased region" description="Polar residues" evidence="4">
    <location>
        <begin position="189"/>
        <end position="198"/>
    </location>
</feature>
<feature type="compositionally biased region" description="Polar residues" evidence="4">
    <location>
        <begin position="390"/>
        <end position="406"/>
    </location>
</feature>
<feature type="compositionally biased region" description="Polar residues" evidence="4">
    <location>
        <begin position="425"/>
        <end position="454"/>
    </location>
</feature>
<feature type="binding site" evidence="3">
    <location>
        <begin position="523"/>
        <end position="530"/>
    </location>
    <ligand>
        <name>ATP</name>
        <dbReference type="ChEBI" id="CHEBI:30616"/>
    </ligand>
</feature>
<accession>B3P8A3</accession>